<proteinExistence type="inferred from homology"/>
<protein>
    <recommendedName>
        <fullName evidence="1">Protein-export protein SecB</fullName>
    </recommendedName>
</protein>
<name>SECB_CERS4</name>
<gene>
    <name evidence="1" type="primary">secB</name>
    <name type="ordered locus">RHOS4_28500</name>
    <name type="ORF">RSP_1237</name>
</gene>
<feature type="chain" id="PRO_0000318259" description="Protein-export protein SecB">
    <location>
        <begin position="1"/>
        <end position="166"/>
    </location>
</feature>
<sequence>MTDANGAPAEAAPQIRMQVLAQYVRDMSFENMVAQKGLQGGDVQPDIQVQVSLDARKRSVEHQYEVITKFKVTSKNKSGSAETLFLLELDYGGIFHVENVPEDQLHPFLLIECPRLLFPFVRRIISDVTRDGGFPPLNVDTVDFLALYRMELARRAEAQKAAQPVQ</sequence>
<comment type="function">
    <text evidence="1">One of the proteins required for the normal export of preproteins out of the cell cytoplasm. It is a molecular chaperone that binds to a subset of precursor proteins, maintaining them in a translocation-competent state. It also specifically binds to its receptor SecA.</text>
</comment>
<comment type="subunit">
    <text evidence="1">Homotetramer, a dimer of dimers. One homotetramer interacts with 1 SecA dimer.</text>
</comment>
<comment type="subcellular location">
    <subcellularLocation>
        <location evidence="1">Cytoplasm</location>
    </subcellularLocation>
</comment>
<comment type="similarity">
    <text evidence="1">Belongs to the SecB family.</text>
</comment>
<reference key="1">
    <citation type="submission" date="2005-09" db="EMBL/GenBank/DDBJ databases">
        <title>Complete sequence of chromosome 1 of Rhodobacter sphaeroides 2.4.1.</title>
        <authorList>
            <person name="Copeland A."/>
            <person name="Lucas S."/>
            <person name="Lapidus A."/>
            <person name="Barry K."/>
            <person name="Detter J.C."/>
            <person name="Glavina T."/>
            <person name="Hammon N."/>
            <person name="Israni S."/>
            <person name="Pitluck S."/>
            <person name="Richardson P."/>
            <person name="Mackenzie C."/>
            <person name="Choudhary M."/>
            <person name="Larimer F."/>
            <person name="Hauser L.J."/>
            <person name="Land M."/>
            <person name="Donohue T.J."/>
            <person name="Kaplan S."/>
        </authorList>
    </citation>
    <scope>NUCLEOTIDE SEQUENCE [LARGE SCALE GENOMIC DNA]</scope>
    <source>
        <strain>ATCC 17023 / DSM 158 / JCM 6121 / CCUG 31486 / LMG 2827 / NBRC 12203 / NCIMB 8253 / ATH 2.4.1.</strain>
    </source>
</reference>
<organism>
    <name type="scientific">Cereibacter sphaeroides (strain ATCC 17023 / DSM 158 / JCM 6121 / CCUG 31486 / LMG 2827 / NBRC 12203 / NCIMB 8253 / ATH 2.4.1.)</name>
    <name type="common">Rhodobacter sphaeroides</name>
    <dbReference type="NCBI Taxonomy" id="272943"/>
    <lineage>
        <taxon>Bacteria</taxon>
        <taxon>Pseudomonadati</taxon>
        <taxon>Pseudomonadota</taxon>
        <taxon>Alphaproteobacteria</taxon>
        <taxon>Rhodobacterales</taxon>
        <taxon>Paracoccaceae</taxon>
        <taxon>Cereibacter</taxon>
    </lineage>
</organism>
<evidence type="ECO:0000255" key="1">
    <source>
        <dbReference type="HAMAP-Rule" id="MF_00821"/>
    </source>
</evidence>
<keyword id="KW-0143">Chaperone</keyword>
<keyword id="KW-0963">Cytoplasm</keyword>
<keyword id="KW-0653">Protein transport</keyword>
<keyword id="KW-1185">Reference proteome</keyword>
<keyword id="KW-0811">Translocation</keyword>
<keyword id="KW-0813">Transport</keyword>
<dbReference type="EMBL" id="CP000143">
    <property type="protein sequence ID" value="ABA80418.2"/>
    <property type="molecule type" value="Genomic_DNA"/>
</dbReference>
<dbReference type="RefSeq" id="WP_002721743.1">
    <property type="nucleotide sequence ID" value="NZ_CP030271.1"/>
</dbReference>
<dbReference type="RefSeq" id="YP_354319.2">
    <property type="nucleotide sequence ID" value="NC_007493.2"/>
</dbReference>
<dbReference type="SMR" id="Q3IYG6"/>
<dbReference type="STRING" id="272943.RSP_1237"/>
<dbReference type="EnsemblBacteria" id="ABA80418">
    <property type="protein sequence ID" value="ABA80418"/>
    <property type="gene ID" value="RSP_1237"/>
</dbReference>
<dbReference type="GeneID" id="67448009"/>
<dbReference type="KEGG" id="rsp:RSP_1237"/>
<dbReference type="PATRIC" id="fig|272943.9.peg.3218"/>
<dbReference type="eggNOG" id="COG1952">
    <property type="taxonomic scope" value="Bacteria"/>
</dbReference>
<dbReference type="OrthoDB" id="9795145at2"/>
<dbReference type="Proteomes" id="UP000002703">
    <property type="component" value="Chromosome 1"/>
</dbReference>
<dbReference type="GO" id="GO:0005737">
    <property type="term" value="C:cytoplasm"/>
    <property type="evidence" value="ECO:0007669"/>
    <property type="project" value="UniProtKB-SubCell"/>
</dbReference>
<dbReference type="GO" id="GO:0051082">
    <property type="term" value="F:unfolded protein binding"/>
    <property type="evidence" value="ECO:0007669"/>
    <property type="project" value="InterPro"/>
</dbReference>
<dbReference type="GO" id="GO:0006457">
    <property type="term" value="P:protein folding"/>
    <property type="evidence" value="ECO:0007669"/>
    <property type="project" value="UniProtKB-UniRule"/>
</dbReference>
<dbReference type="GO" id="GO:0051262">
    <property type="term" value="P:protein tetramerization"/>
    <property type="evidence" value="ECO:0007669"/>
    <property type="project" value="InterPro"/>
</dbReference>
<dbReference type="GO" id="GO:0015031">
    <property type="term" value="P:protein transport"/>
    <property type="evidence" value="ECO:0007669"/>
    <property type="project" value="UniProtKB-UniRule"/>
</dbReference>
<dbReference type="Gene3D" id="3.10.420.10">
    <property type="entry name" value="SecB-like"/>
    <property type="match status" value="1"/>
</dbReference>
<dbReference type="HAMAP" id="MF_00821">
    <property type="entry name" value="SecB"/>
    <property type="match status" value="1"/>
</dbReference>
<dbReference type="InterPro" id="IPR003708">
    <property type="entry name" value="SecB"/>
</dbReference>
<dbReference type="InterPro" id="IPR035958">
    <property type="entry name" value="SecB-like_sf"/>
</dbReference>
<dbReference type="NCBIfam" id="NF004392">
    <property type="entry name" value="PRK05751.1-3"/>
    <property type="match status" value="1"/>
</dbReference>
<dbReference type="NCBIfam" id="TIGR00809">
    <property type="entry name" value="secB"/>
    <property type="match status" value="1"/>
</dbReference>
<dbReference type="PANTHER" id="PTHR36918">
    <property type="match status" value="1"/>
</dbReference>
<dbReference type="PANTHER" id="PTHR36918:SF1">
    <property type="entry name" value="PROTEIN-EXPORT PROTEIN SECB"/>
    <property type="match status" value="1"/>
</dbReference>
<dbReference type="Pfam" id="PF02556">
    <property type="entry name" value="SecB"/>
    <property type="match status" value="1"/>
</dbReference>
<dbReference type="PRINTS" id="PR01594">
    <property type="entry name" value="SECBCHAPRONE"/>
</dbReference>
<dbReference type="SUPFAM" id="SSF54611">
    <property type="entry name" value="SecB-like"/>
    <property type="match status" value="1"/>
</dbReference>
<accession>Q3IYG6</accession>